<protein>
    <recommendedName>
        <fullName>Cell division topological specificity factor</fullName>
    </recommendedName>
</protein>
<comment type="function">
    <text evidence="1">Prevents the cell division inhibition by proteins MinC and MinD at internal division sites while permitting inhibition at polar sites. This ensures cell division at the proper site by restricting the formation of a division septum at the midpoint of the long axis of the cell (By similarity).</text>
</comment>
<comment type="similarity">
    <text evidence="2">Belongs to the MinE family.</text>
</comment>
<reference key="1">
    <citation type="journal article" date="2000" name="DNA Res.">
        <title>Complete genome structure of the nitrogen-fixing symbiotic bacterium Mesorhizobium loti.</title>
        <authorList>
            <person name="Kaneko T."/>
            <person name="Nakamura Y."/>
            <person name="Sato S."/>
            <person name="Asamizu E."/>
            <person name="Kato T."/>
            <person name="Sasamoto S."/>
            <person name="Watanabe A."/>
            <person name="Idesawa K."/>
            <person name="Ishikawa A."/>
            <person name="Kawashima K."/>
            <person name="Kimura T."/>
            <person name="Kishida Y."/>
            <person name="Kiyokawa C."/>
            <person name="Kohara M."/>
            <person name="Matsumoto M."/>
            <person name="Matsuno A."/>
            <person name="Mochizuki Y."/>
            <person name="Nakayama S."/>
            <person name="Nakazaki N."/>
            <person name="Shimpo S."/>
            <person name="Sugimoto M."/>
            <person name="Takeuchi C."/>
            <person name="Yamada M."/>
            <person name="Tabata S."/>
        </authorList>
    </citation>
    <scope>NUCLEOTIDE SEQUENCE [LARGE SCALE GENOMIC DNA]</scope>
    <source>
        <strain>LMG 29417 / CECT 9101 / MAFF 303099</strain>
    </source>
</reference>
<keyword id="KW-0131">Cell cycle</keyword>
<keyword id="KW-0132">Cell division</keyword>
<dbReference type="EMBL" id="BA000012">
    <property type="protein sequence ID" value="BAB49196.1"/>
    <property type="molecule type" value="Genomic_DNA"/>
</dbReference>
<dbReference type="SMR" id="P58153"/>
<dbReference type="KEGG" id="mlo:msl1949"/>
<dbReference type="eggNOG" id="COG0851">
    <property type="taxonomic scope" value="Bacteria"/>
</dbReference>
<dbReference type="HOGENOM" id="CLU_137929_2_0_5"/>
<dbReference type="Proteomes" id="UP000000552">
    <property type="component" value="Chromosome"/>
</dbReference>
<dbReference type="GO" id="GO:0051301">
    <property type="term" value="P:cell division"/>
    <property type="evidence" value="ECO:0007669"/>
    <property type="project" value="UniProtKB-KW"/>
</dbReference>
<dbReference type="GO" id="GO:0032955">
    <property type="term" value="P:regulation of division septum assembly"/>
    <property type="evidence" value="ECO:0007669"/>
    <property type="project" value="InterPro"/>
</dbReference>
<dbReference type="Gene3D" id="3.30.1070.10">
    <property type="entry name" value="Cell division topological specificity factor MinE"/>
    <property type="match status" value="1"/>
</dbReference>
<dbReference type="HAMAP" id="MF_00262">
    <property type="entry name" value="MinE"/>
    <property type="match status" value="1"/>
</dbReference>
<dbReference type="InterPro" id="IPR005527">
    <property type="entry name" value="MinE"/>
</dbReference>
<dbReference type="InterPro" id="IPR036707">
    <property type="entry name" value="MinE_sf"/>
</dbReference>
<dbReference type="NCBIfam" id="TIGR01215">
    <property type="entry name" value="minE"/>
    <property type="match status" value="1"/>
</dbReference>
<dbReference type="NCBIfam" id="NF001422">
    <property type="entry name" value="PRK00296.1"/>
    <property type="match status" value="1"/>
</dbReference>
<dbReference type="Pfam" id="PF03776">
    <property type="entry name" value="MinE"/>
    <property type="match status" value="1"/>
</dbReference>
<dbReference type="SUPFAM" id="SSF55229">
    <property type="entry name" value="Cell division protein MinE topological specificity domain"/>
    <property type="match status" value="1"/>
</dbReference>
<organism>
    <name type="scientific">Mesorhizobium japonicum (strain LMG 29417 / CECT 9101 / MAFF 303099)</name>
    <name type="common">Mesorhizobium loti (strain MAFF 303099)</name>
    <dbReference type="NCBI Taxonomy" id="266835"/>
    <lineage>
        <taxon>Bacteria</taxon>
        <taxon>Pseudomonadati</taxon>
        <taxon>Pseudomonadota</taxon>
        <taxon>Alphaproteobacteria</taxon>
        <taxon>Hyphomicrobiales</taxon>
        <taxon>Phyllobacteriaceae</taxon>
        <taxon>Mesorhizobium</taxon>
    </lineage>
</organism>
<proteinExistence type="inferred from homology"/>
<feature type="chain" id="PRO_0000205885" description="Cell division topological specificity factor">
    <location>
        <begin position="1"/>
        <end position="91"/>
    </location>
</feature>
<accession>P58153</accession>
<sequence>MMNVFDLFKRRSSAPVARERLQVLLAYERRNRSQPDLVSILREEIMAVIAKHVQIDQDYLQVSMDRGETMSTLEIDIQIPNKSAVPMAIAG</sequence>
<name>MINE_RHILO</name>
<evidence type="ECO:0000250" key="1"/>
<evidence type="ECO:0000305" key="2"/>
<gene>
    <name type="primary">minE</name>
    <name type="ordered locus">msl1949</name>
</gene>